<reference key="1">
    <citation type="journal article" date="2004" name="Mol. Biol. Evol.">
        <title>Chloroplast phylogeny indicates that bryophytes are monophyletic.</title>
        <authorList>
            <person name="Nishiyama T."/>
            <person name="Wolf P.G."/>
            <person name="Kugita M."/>
            <person name="Sinclair R.B."/>
            <person name="Sugita M."/>
            <person name="Sugiura C."/>
            <person name="Wakasugi T."/>
            <person name="Yamada K."/>
            <person name="Yoshinaga K."/>
            <person name="Yamaguchi K."/>
            <person name="Ueda K."/>
            <person name="Hasebe M."/>
        </authorList>
    </citation>
    <scope>NUCLEOTIDE SEQUENCE [LARGE SCALE GENOMIC DNA]</scope>
    <source>
        <strain>Kingyoku</strain>
    </source>
</reference>
<comment type="subunit">
    <text evidence="1">Part of the 50S ribosomal subunit.</text>
</comment>
<comment type="subcellular location">
    <subcellularLocation>
        <location>Plastid</location>
        <location>Chloroplast</location>
    </subcellularLocation>
</comment>
<comment type="similarity">
    <text evidence="4">Belongs to the universal ribosomal protein uL2 family.</text>
</comment>
<geneLocation type="chloroplast"/>
<name>RK2_PSINU</name>
<dbReference type="EMBL" id="AP004638">
    <property type="protein sequence ID" value="BAB84258.1"/>
    <property type="molecule type" value="Genomic_DNA"/>
</dbReference>
<dbReference type="RefSeq" id="NP_569670.1">
    <property type="nucleotide sequence ID" value="NC_003386.1"/>
</dbReference>
<dbReference type="SMR" id="Q8WHY1"/>
<dbReference type="GeneID" id="2545156"/>
<dbReference type="GO" id="GO:0009507">
    <property type="term" value="C:chloroplast"/>
    <property type="evidence" value="ECO:0007669"/>
    <property type="project" value="UniProtKB-SubCell"/>
</dbReference>
<dbReference type="GO" id="GO:0005762">
    <property type="term" value="C:mitochondrial large ribosomal subunit"/>
    <property type="evidence" value="ECO:0007669"/>
    <property type="project" value="TreeGrafter"/>
</dbReference>
<dbReference type="GO" id="GO:0019843">
    <property type="term" value="F:rRNA binding"/>
    <property type="evidence" value="ECO:0007669"/>
    <property type="project" value="UniProtKB-UniRule"/>
</dbReference>
<dbReference type="GO" id="GO:0003735">
    <property type="term" value="F:structural constituent of ribosome"/>
    <property type="evidence" value="ECO:0007669"/>
    <property type="project" value="InterPro"/>
</dbReference>
<dbReference type="GO" id="GO:0016740">
    <property type="term" value="F:transferase activity"/>
    <property type="evidence" value="ECO:0007669"/>
    <property type="project" value="InterPro"/>
</dbReference>
<dbReference type="GO" id="GO:0032543">
    <property type="term" value="P:mitochondrial translation"/>
    <property type="evidence" value="ECO:0007669"/>
    <property type="project" value="TreeGrafter"/>
</dbReference>
<dbReference type="FunFam" id="2.30.30.30:FF:000001">
    <property type="entry name" value="50S ribosomal protein L2"/>
    <property type="match status" value="1"/>
</dbReference>
<dbReference type="FunFam" id="2.40.50.140:FF:000003">
    <property type="entry name" value="50S ribosomal protein L2"/>
    <property type="match status" value="1"/>
</dbReference>
<dbReference type="FunFam" id="4.10.950.10:FF:000001">
    <property type="entry name" value="50S ribosomal protein L2"/>
    <property type="match status" value="1"/>
</dbReference>
<dbReference type="Gene3D" id="2.30.30.30">
    <property type="match status" value="1"/>
</dbReference>
<dbReference type="Gene3D" id="2.40.50.140">
    <property type="entry name" value="Nucleic acid-binding proteins"/>
    <property type="match status" value="1"/>
</dbReference>
<dbReference type="Gene3D" id="4.10.950.10">
    <property type="entry name" value="Ribosomal protein L2, domain 3"/>
    <property type="match status" value="1"/>
</dbReference>
<dbReference type="HAMAP" id="MF_01320_B">
    <property type="entry name" value="Ribosomal_uL2_B"/>
    <property type="match status" value="1"/>
</dbReference>
<dbReference type="InterPro" id="IPR012340">
    <property type="entry name" value="NA-bd_OB-fold"/>
</dbReference>
<dbReference type="InterPro" id="IPR014722">
    <property type="entry name" value="Rib_uL2_dom2"/>
</dbReference>
<dbReference type="InterPro" id="IPR002171">
    <property type="entry name" value="Ribosomal_uL2"/>
</dbReference>
<dbReference type="InterPro" id="IPR005880">
    <property type="entry name" value="Ribosomal_uL2_bac/org-type"/>
</dbReference>
<dbReference type="InterPro" id="IPR022669">
    <property type="entry name" value="Ribosomal_uL2_C"/>
</dbReference>
<dbReference type="InterPro" id="IPR014726">
    <property type="entry name" value="Ribosomal_uL2_dom3"/>
</dbReference>
<dbReference type="InterPro" id="IPR022666">
    <property type="entry name" value="Ribosomal_uL2_RNA-bd_dom"/>
</dbReference>
<dbReference type="InterPro" id="IPR008991">
    <property type="entry name" value="Translation_prot_SH3-like_sf"/>
</dbReference>
<dbReference type="NCBIfam" id="TIGR01171">
    <property type="entry name" value="rplB_bact"/>
    <property type="match status" value="1"/>
</dbReference>
<dbReference type="PANTHER" id="PTHR13691:SF5">
    <property type="entry name" value="LARGE RIBOSOMAL SUBUNIT PROTEIN UL2M"/>
    <property type="match status" value="1"/>
</dbReference>
<dbReference type="PANTHER" id="PTHR13691">
    <property type="entry name" value="RIBOSOMAL PROTEIN L2"/>
    <property type="match status" value="1"/>
</dbReference>
<dbReference type="Pfam" id="PF00181">
    <property type="entry name" value="Ribosomal_L2"/>
    <property type="match status" value="1"/>
</dbReference>
<dbReference type="Pfam" id="PF03947">
    <property type="entry name" value="Ribosomal_L2_C"/>
    <property type="match status" value="1"/>
</dbReference>
<dbReference type="PIRSF" id="PIRSF002158">
    <property type="entry name" value="Ribosomal_L2"/>
    <property type="match status" value="1"/>
</dbReference>
<dbReference type="SMART" id="SM01383">
    <property type="entry name" value="Ribosomal_L2"/>
    <property type="match status" value="1"/>
</dbReference>
<dbReference type="SMART" id="SM01382">
    <property type="entry name" value="Ribosomal_L2_C"/>
    <property type="match status" value="1"/>
</dbReference>
<dbReference type="SUPFAM" id="SSF50249">
    <property type="entry name" value="Nucleic acid-binding proteins"/>
    <property type="match status" value="1"/>
</dbReference>
<dbReference type="SUPFAM" id="SSF50104">
    <property type="entry name" value="Translation proteins SH3-like domain"/>
    <property type="match status" value="1"/>
</dbReference>
<proteinExistence type="inferred from homology"/>
<sequence>MAIRSYRAYTPGTRHRSVSTFEEISKYKPKKRLTLNKHSKKGRNNRGIITSRHRGGGHKRIYREIDFRRNNNDAPGKIATIEYDPNRNSYICIVNYENGDKRYILHPKGLNVGDLIFSGTEAPISNGNTIPLTKIPVGTFIHNIELTPGKGGQLVRAAGTVAKIMAKEEKWATIRLPSGEFRLISKNCLATIGQVGNIDANKITLGKAGSKRWLGKRPIVRGVAMNSVDHPHGGGEGKTSIGRKKPLTPWGRTALGSKSRPMTKYSNIFILRRRKKR</sequence>
<organism>
    <name type="scientific">Psilotum nudum</name>
    <name type="common">Whisk fern</name>
    <name type="synonym">Lycopodium nudum</name>
    <dbReference type="NCBI Taxonomy" id="3240"/>
    <lineage>
        <taxon>Eukaryota</taxon>
        <taxon>Viridiplantae</taxon>
        <taxon>Streptophyta</taxon>
        <taxon>Embryophyta</taxon>
        <taxon>Tracheophyta</taxon>
        <taxon>Polypodiopsida</taxon>
        <taxon>Ophioglossidae</taxon>
        <taxon>Psilotales</taxon>
        <taxon>Psilotaceae</taxon>
        <taxon>Psilotum</taxon>
    </lineage>
</organism>
<gene>
    <name type="primary">rpl2</name>
</gene>
<feature type="chain" id="PRO_0000129700" description="Large ribosomal subunit protein uL2c">
    <location>
        <begin position="1"/>
        <end position="277"/>
    </location>
</feature>
<feature type="region of interest" description="Disordered" evidence="3">
    <location>
        <begin position="36"/>
        <end position="56"/>
    </location>
</feature>
<feature type="region of interest" description="Disordered" evidence="3">
    <location>
        <begin position="225"/>
        <end position="259"/>
    </location>
</feature>
<protein>
    <recommendedName>
        <fullName evidence="2">Large ribosomal subunit protein uL2c</fullName>
    </recommendedName>
    <alternativeName>
        <fullName evidence="4">50S ribosomal protein L2, chloroplastic</fullName>
    </alternativeName>
</protein>
<evidence type="ECO:0000250" key="1"/>
<evidence type="ECO:0000255" key="2">
    <source>
        <dbReference type="HAMAP-Rule" id="MF_01320"/>
    </source>
</evidence>
<evidence type="ECO:0000256" key="3">
    <source>
        <dbReference type="SAM" id="MobiDB-lite"/>
    </source>
</evidence>
<evidence type="ECO:0000305" key="4"/>
<accession>Q8WHY1</accession>
<keyword id="KW-0150">Chloroplast</keyword>
<keyword id="KW-0934">Plastid</keyword>
<keyword id="KW-0687">Ribonucleoprotein</keyword>
<keyword id="KW-0689">Ribosomal protein</keyword>